<protein>
    <recommendedName>
        <fullName>Isoaspartyl peptidase/L-asparaginase</fullName>
        <ecNumber>3.4.19.5</ecNumber>
    </recommendedName>
    <alternativeName>
        <fullName>L-asparagine amidohydrolase</fullName>
    </alternativeName>
    <component>
        <recommendedName>
            <fullName>Isoaspartyl peptidase/L-asparaginase subunit alpha</fullName>
        </recommendedName>
    </component>
    <component>
        <recommendedName>
            <fullName>Isoaspartyl peptidase/L-asparaginase subunit beta</fullName>
        </recommendedName>
    </component>
</protein>
<proteinExistence type="evidence at transcript level"/>
<comment type="function">
    <text evidence="1">Acts in asparagine catabolism but also in the final steps of protein degradation via hydrolysis of a range of isoaspartyl dipeptides.</text>
</comment>
<comment type="catalytic activity">
    <reaction>
        <text>Cleavage of a beta-linked Asp residue from the N-terminus of a polypeptide.</text>
        <dbReference type="EC" id="3.4.19.5"/>
    </reaction>
</comment>
<comment type="subunit">
    <text evidence="1">Heterotetramer of two alpha and two beta chains arranged as a dimer of alpha/beta heterodimers.</text>
</comment>
<comment type="tissue specificity">
    <text>Developing seeds.</text>
</comment>
<comment type="PTM">
    <text evidence="1">Cleaved into an alpha and beta chain by autocatalysis; this activates the enzyme. The N-terminal residue of the beta subunit is responsible for the nucleophile hydrolase activity (By similarity).</text>
</comment>
<comment type="similarity">
    <text evidence="2">Belongs to the Ntn-hydrolase family.</text>
</comment>
<evidence type="ECO:0000250" key="1"/>
<evidence type="ECO:0000305" key="2"/>
<sequence length="325" mass="34312">MGGWSIALHGGAGDIPFSLPPERRQPREEGLRHCLQIGVEALKSQKPPLDVVELVVRELENIQHFNAGIGSVLTNSGTVEMEASIMDGKTMKCGAVSGLSTVLNPISLARLVMDKTPHIYLAFQGAQDFAKQQGVETVDSSHFITAENVERLKLAIEANRVQVDYSQYNYPQPAQDDAEKELPLANGDSQIGTVGCVAVDSHGNLASATSTGGLVNKMVGRIGDTPLIGAGTYANELCAVSATGKGEAIISATVARDVAALMEFKGLSLKEAADYVVHERTPKGTVGLIAVSAAGEIAMPFNTTGMFRASATEDGYSEIAIWPTT</sequence>
<feature type="chain" id="PRO_0000045452" description="Isoaspartyl peptidase/L-asparaginase subunit alpha">
    <location>
        <begin position="1"/>
        <end position="192"/>
    </location>
</feature>
<feature type="chain" id="PRO_0000045453" description="Isoaspartyl peptidase/L-asparaginase subunit beta">
    <location>
        <begin position="193"/>
        <end position="325"/>
    </location>
</feature>
<feature type="active site" description="Nucleophile" evidence="1">
    <location>
        <position position="193"/>
    </location>
</feature>
<feature type="binding site" evidence="1">
    <location>
        <begin position="221"/>
        <end position="224"/>
    </location>
    <ligand>
        <name>substrate</name>
    </ligand>
</feature>
<feature type="binding site" evidence="1">
    <location>
        <begin position="243"/>
        <end position="246"/>
    </location>
    <ligand>
        <name>substrate</name>
    </ligand>
</feature>
<feature type="site" description="Cleavage; by autolysis" evidence="1">
    <location>
        <begin position="192"/>
        <end position="193"/>
    </location>
</feature>
<keyword id="KW-0068">Autocatalytic cleavage</keyword>
<keyword id="KW-0378">Hydrolase</keyword>
<keyword id="KW-0645">Protease</keyword>
<reference key="1">
    <citation type="journal article" date="1992" name="Plant Mol. Biol.">
        <title>Molecular cloning of the gene encoding developing seed L-asparaginase from Lupinus angustifolius.</title>
        <authorList>
            <person name="Dickson J.M.J.J."/>
            <person name="Vincze E."/>
            <person name="Grant M.R."/>
            <person name="Smith L.A."/>
            <person name="Rodber K.A."/>
            <person name="Farnden K.J.F."/>
            <person name="Reynolds P.H.S."/>
        </authorList>
    </citation>
    <scope>NUCLEOTIDE SEQUENCE [GENOMIC DNA]</scope>
    <source>
        <strain>cv. Uniharvest</strain>
        <tissue>Seed</tissue>
    </source>
</reference>
<name>ASPG_LUPAN</name>
<organism>
    <name type="scientific">Lupinus angustifolius</name>
    <name type="common">Narrow-leaved blue lupine</name>
    <dbReference type="NCBI Taxonomy" id="3871"/>
    <lineage>
        <taxon>Eukaryota</taxon>
        <taxon>Viridiplantae</taxon>
        <taxon>Streptophyta</taxon>
        <taxon>Embryophyta</taxon>
        <taxon>Tracheophyta</taxon>
        <taxon>Spermatophyta</taxon>
        <taxon>Magnoliopsida</taxon>
        <taxon>eudicotyledons</taxon>
        <taxon>Gunneridae</taxon>
        <taxon>Pentapetalae</taxon>
        <taxon>rosids</taxon>
        <taxon>fabids</taxon>
        <taxon>Fabales</taxon>
        <taxon>Fabaceae</taxon>
        <taxon>Papilionoideae</taxon>
        <taxon>50 kb inversion clade</taxon>
        <taxon>genistoids sensu lato</taxon>
        <taxon>core genistoids</taxon>
        <taxon>Genisteae</taxon>
        <taxon>Lupinus</taxon>
    </lineage>
</organism>
<dbReference type="EC" id="3.4.19.5"/>
<dbReference type="EMBL" id="X60691">
    <property type="protein sequence ID" value="CAA43099.1"/>
    <property type="molecule type" value="Genomic_DNA"/>
</dbReference>
<dbReference type="PIR" id="S24757">
    <property type="entry name" value="S24757"/>
</dbReference>
<dbReference type="RefSeq" id="XP_019439000.1">
    <property type="nucleotide sequence ID" value="XM_019583455.1"/>
</dbReference>
<dbReference type="SMR" id="P30364"/>
<dbReference type="MEROPS" id="T02.A01"/>
<dbReference type="EnsemblPlants" id="OIW19678">
    <property type="protein sequence ID" value="OIW19678"/>
    <property type="gene ID" value="TanjilG_18488"/>
</dbReference>
<dbReference type="GeneID" id="109344701"/>
<dbReference type="Gramene" id="OIW19678">
    <property type="protein sequence ID" value="OIW19678"/>
    <property type="gene ID" value="TanjilG_18488"/>
</dbReference>
<dbReference type="KEGG" id="lang:109344701"/>
<dbReference type="OrthoDB" id="2262349at2759"/>
<dbReference type="GO" id="GO:0004067">
    <property type="term" value="F:asparaginase activity"/>
    <property type="evidence" value="ECO:0007669"/>
    <property type="project" value="EnsemblPlants"/>
</dbReference>
<dbReference type="GO" id="GO:0008798">
    <property type="term" value="F:beta-aspartyl-peptidase activity"/>
    <property type="evidence" value="ECO:0007669"/>
    <property type="project" value="UniProtKB-EC"/>
</dbReference>
<dbReference type="GO" id="GO:0006508">
    <property type="term" value="P:proteolysis"/>
    <property type="evidence" value="ECO:0007669"/>
    <property type="project" value="UniProtKB-KW"/>
</dbReference>
<dbReference type="CDD" id="cd04701">
    <property type="entry name" value="Asparaginase_2"/>
    <property type="match status" value="1"/>
</dbReference>
<dbReference type="FunFam" id="3.60.20.30:FF:000001">
    <property type="entry name" value="Isoaspartyl peptidase/L-asparaginase"/>
    <property type="match status" value="1"/>
</dbReference>
<dbReference type="Gene3D" id="3.60.20.30">
    <property type="entry name" value="(Glycosyl)asparaginase"/>
    <property type="match status" value="1"/>
</dbReference>
<dbReference type="InterPro" id="IPR029055">
    <property type="entry name" value="Ntn_hydrolases_N"/>
</dbReference>
<dbReference type="InterPro" id="IPR000246">
    <property type="entry name" value="Peptidase_T2"/>
</dbReference>
<dbReference type="PANTHER" id="PTHR10188">
    <property type="entry name" value="L-ASPARAGINASE"/>
    <property type="match status" value="1"/>
</dbReference>
<dbReference type="PANTHER" id="PTHR10188:SF6">
    <property type="entry name" value="N(4)-(BETA-N-ACETYLGLUCOSAMINYL)-L-ASPARAGINASE"/>
    <property type="match status" value="1"/>
</dbReference>
<dbReference type="Pfam" id="PF01112">
    <property type="entry name" value="Asparaginase_2"/>
    <property type="match status" value="1"/>
</dbReference>
<dbReference type="SUPFAM" id="SSF56235">
    <property type="entry name" value="N-terminal nucleophile aminohydrolases (Ntn hydrolases)"/>
    <property type="match status" value="1"/>
</dbReference>
<accession>P30364</accession>